<proteinExistence type="evidence at protein level"/>
<evidence type="ECO:0000250" key="1">
    <source>
        <dbReference type="UniProtKB" id="O54963"/>
    </source>
</evidence>
<evidence type="ECO:0000250" key="2">
    <source>
        <dbReference type="UniProtKB" id="Q8VIG1"/>
    </source>
</evidence>
<evidence type="ECO:0000255" key="3">
    <source>
        <dbReference type="PROSITE-ProRule" id="PRU00042"/>
    </source>
</evidence>
<evidence type="ECO:0000256" key="4">
    <source>
        <dbReference type="SAM" id="MobiDB-lite"/>
    </source>
</evidence>
<evidence type="ECO:0000269" key="5">
    <source>
    </source>
</evidence>
<evidence type="ECO:0000269" key="6">
    <source>
    </source>
</evidence>
<evidence type="ECO:0000269" key="7">
    <source>
    </source>
</evidence>
<evidence type="ECO:0000269" key="8">
    <source>
    </source>
</evidence>
<evidence type="ECO:0000269" key="9">
    <source>
    </source>
</evidence>
<evidence type="ECO:0000269" key="10">
    <source>
    </source>
</evidence>
<evidence type="ECO:0000269" key="11">
    <source>
    </source>
</evidence>
<evidence type="ECO:0000269" key="12">
    <source>
    </source>
</evidence>
<evidence type="ECO:0000269" key="13">
    <source>
    </source>
</evidence>
<evidence type="ECO:0000269" key="14">
    <source>
    </source>
</evidence>
<evidence type="ECO:0000269" key="15">
    <source>
    </source>
</evidence>
<evidence type="ECO:0000269" key="16">
    <source>
    </source>
</evidence>
<evidence type="ECO:0000269" key="17">
    <source>
    </source>
</evidence>
<evidence type="ECO:0000269" key="18">
    <source>
    </source>
</evidence>
<evidence type="ECO:0000269" key="19">
    <source>
    </source>
</evidence>
<evidence type="ECO:0000269" key="20">
    <source>
    </source>
</evidence>
<evidence type="ECO:0000269" key="21">
    <source>
    </source>
</evidence>
<evidence type="ECO:0000269" key="22">
    <source>
    </source>
</evidence>
<evidence type="ECO:0000269" key="23">
    <source>
    </source>
</evidence>
<evidence type="ECO:0000269" key="24">
    <source>
    </source>
</evidence>
<evidence type="ECO:0000269" key="25">
    <source>
    </source>
</evidence>
<evidence type="ECO:0000269" key="26">
    <source>
    </source>
</evidence>
<evidence type="ECO:0000269" key="27">
    <source>
    </source>
</evidence>
<evidence type="ECO:0000303" key="28">
    <source>
    </source>
</evidence>
<evidence type="ECO:0000303" key="29">
    <source>
    </source>
</evidence>
<evidence type="ECO:0000303" key="30">
    <source>
    </source>
</evidence>
<evidence type="ECO:0000305" key="31"/>
<evidence type="ECO:0007744" key="32">
    <source>
    </source>
</evidence>
<evidence type="ECO:0007744" key="33">
    <source>
    </source>
</evidence>
<evidence type="ECO:0007829" key="34">
    <source>
        <dbReference type="PDB" id="2CZY"/>
    </source>
</evidence>
<protein>
    <recommendedName>
        <fullName>RE1-silencing transcription factor</fullName>
    </recommendedName>
    <alternativeName>
        <fullName>Neural-restrictive silencer factor</fullName>
    </alternativeName>
    <alternativeName>
        <fullName>X2 box repressor</fullName>
    </alternativeName>
</protein>
<gene>
    <name type="primary">REST</name>
    <name type="synonym">NRSF</name>
    <name type="synonym">XBR</name>
</gene>
<reference key="1">
    <citation type="journal article" date="1995" name="Cell">
        <title>REST: a mammalian silencer protein that restricts sodium channel gene expression to neurons.</title>
        <authorList>
            <person name="Chong J.A."/>
            <person name="Tapia-Ramirez J."/>
            <person name="Kim S."/>
            <person name="Toledo-Aral J.J."/>
            <person name="Zheng Y."/>
            <person name="Boutros M.C."/>
            <person name="Altshuller Y.M."/>
            <person name="Frohman M.A."/>
            <person name="Kraner S.D."/>
            <person name="Mandel G."/>
        </authorList>
    </citation>
    <scope>NUCLEOTIDE SEQUENCE [MRNA] (ISOFORM 1)</scope>
    <scope>FUNCTION</scope>
</reference>
<reference key="2">
    <citation type="journal article" date="1995" name="Science">
        <title>The neuron-restrictive silencer factor (NRSF): a coordinate repressor of multiple neuron-specific genes.</title>
        <authorList>
            <person name="Schoenherr C.J."/>
            <person name="Anderson D.J."/>
        </authorList>
    </citation>
    <scope>NUCLEOTIDE SEQUENCE [MRNA] (ISOFORM 2)</scope>
    <scope>NUCLEOTIDE SEQUENCE [MRNA] OF 1-599 (ISOFORM 1)</scope>
    <scope>FUNCTION</scope>
</reference>
<reference key="3">
    <citation type="journal article" date="1996" name="J. Immunol.">
        <title>A zinc finger protein that represses transcription of the human MHC class II gene, DPA.</title>
        <authorList>
            <person name="Scholl T."/>
            <person name="Stevens M.B."/>
            <person name="Mahanta S."/>
            <person name="Strominger J.L."/>
        </authorList>
    </citation>
    <scope>NUCLEOTIDE SEQUENCE [MRNA] (ISOFORM 1)</scope>
    <scope>FUNCTION</scope>
    <scope>TISSUE SPECIFICITY</scope>
    <scope>VARIANT LEU-797</scope>
</reference>
<reference key="4">
    <citation type="submission" date="2005-03" db="EMBL/GenBank/DDBJ databases">
        <authorList>
            <person name="Totoki Y."/>
            <person name="Toyoda A."/>
            <person name="Takeda T."/>
            <person name="Sakaki Y."/>
            <person name="Tanaka A."/>
            <person name="Yokoyama S."/>
            <person name="Ohara O."/>
            <person name="Nagase T."/>
            <person name="Kikuno R.F."/>
        </authorList>
    </citation>
    <scope>NUCLEOTIDE SEQUENCE [LARGE SCALE MRNA] (ISOFORM 1)</scope>
    <source>
        <tissue>Brain</tissue>
    </source>
</reference>
<reference key="5">
    <citation type="journal article" date="2005" name="Nature">
        <title>Generation and annotation of the DNA sequences of human chromosomes 2 and 4.</title>
        <authorList>
            <person name="Hillier L.W."/>
            <person name="Graves T.A."/>
            <person name="Fulton R.S."/>
            <person name="Fulton L.A."/>
            <person name="Pepin K.H."/>
            <person name="Minx P."/>
            <person name="Wagner-McPherson C."/>
            <person name="Layman D."/>
            <person name="Wylie K."/>
            <person name="Sekhon M."/>
            <person name="Becker M.C."/>
            <person name="Fewell G.A."/>
            <person name="Delehaunty K.D."/>
            <person name="Miner T.L."/>
            <person name="Nash W.E."/>
            <person name="Kremitzki C."/>
            <person name="Oddy L."/>
            <person name="Du H."/>
            <person name="Sun H."/>
            <person name="Bradshaw-Cordum H."/>
            <person name="Ali J."/>
            <person name="Carter J."/>
            <person name="Cordes M."/>
            <person name="Harris A."/>
            <person name="Isak A."/>
            <person name="van Brunt A."/>
            <person name="Nguyen C."/>
            <person name="Du F."/>
            <person name="Courtney L."/>
            <person name="Kalicki J."/>
            <person name="Ozersky P."/>
            <person name="Abbott S."/>
            <person name="Armstrong J."/>
            <person name="Belter E.A."/>
            <person name="Caruso L."/>
            <person name="Cedroni M."/>
            <person name="Cotton M."/>
            <person name="Davidson T."/>
            <person name="Desai A."/>
            <person name="Elliott G."/>
            <person name="Erb T."/>
            <person name="Fronick C."/>
            <person name="Gaige T."/>
            <person name="Haakenson W."/>
            <person name="Haglund K."/>
            <person name="Holmes A."/>
            <person name="Harkins R."/>
            <person name="Kim K."/>
            <person name="Kruchowski S.S."/>
            <person name="Strong C.M."/>
            <person name="Grewal N."/>
            <person name="Goyea E."/>
            <person name="Hou S."/>
            <person name="Levy A."/>
            <person name="Martinka S."/>
            <person name="Mead K."/>
            <person name="McLellan M.D."/>
            <person name="Meyer R."/>
            <person name="Randall-Maher J."/>
            <person name="Tomlinson C."/>
            <person name="Dauphin-Kohlberg S."/>
            <person name="Kozlowicz-Reilly A."/>
            <person name="Shah N."/>
            <person name="Swearengen-Shahid S."/>
            <person name="Snider J."/>
            <person name="Strong J.T."/>
            <person name="Thompson J."/>
            <person name="Yoakum M."/>
            <person name="Leonard S."/>
            <person name="Pearman C."/>
            <person name="Trani L."/>
            <person name="Radionenko M."/>
            <person name="Waligorski J.E."/>
            <person name="Wang C."/>
            <person name="Rock S.M."/>
            <person name="Tin-Wollam A.-M."/>
            <person name="Maupin R."/>
            <person name="Latreille P."/>
            <person name="Wendl M.C."/>
            <person name="Yang S.-P."/>
            <person name="Pohl C."/>
            <person name="Wallis J.W."/>
            <person name="Spieth J."/>
            <person name="Bieri T.A."/>
            <person name="Berkowicz N."/>
            <person name="Nelson J.O."/>
            <person name="Osborne J."/>
            <person name="Ding L."/>
            <person name="Meyer R."/>
            <person name="Sabo A."/>
            <person name="Shotland Y."/>
            <person name="Sinha P."/>
            <person name="Wohldmann P.E."/>
            <person name="Cook L.L."/>
            <person name="Hickenbotham M.T."/>
            <person name="Eldred J."/>
            <person name="Williams D."/>
            <person name="Jones T.A."/>
            <person name="She X."/>
            <person name="Ciccarelli F.D."/>
            <person name="Izaurralde E."/>
            <person name="Taylor J."/>
            <person name="Schmutz J."/>
            <person name="Myers R.M."/>
            <person name="Cox D.R."/>
            <person name="Huang X."/>
            <person name="McPherson J.D."/>
            <person name="Mardis E.R."/>
            <person name="Clifton S.W."/>
            <person name="Warren W.C."/>
            <person name="Chinwalla A.T."/>
            <person name="Eddy S.R."/>
            <person name="Marra M.A."/>
            <person name="Ovcharenko I."/>
            <person name="Furey T.S."/>
            <person name="Miller W."/>
            <person name="Eichler E.E."/>
            <person name="Bork P."/>
            <person name="Suyama M."/>
            <person name="Torrents D."/>
            <person name="Waterston R.H."/>
            <person name="Wilson R.K."/>
        </authorList>
    </citation>
    <scope>NUCLEOTIDE SEQUENCE [LARGE SCALE GENOMIC DNA]</scope>
</reference>
<reference key="6">
    <citation type="submission" date="2005-07" db="EMBL/GenBank/DDBJ databases">
        <authorList>
            <person name="Mural R.J."/>
            <person name="Istrail S."/>
            <person name="Sutton G.G."/>
            <person name="Florea L."/>
            <person name="Halpern A.L."/>
            <person name="Mobarry C.M."/>
            <person name="Lippert R."/>
            <person name="Walenz B."/>
            <person name="Shatkay H."/>
            <person name="Dew I."/>
            <person name="Miller J.R."/>
            <person name="Flanigan M.J."/>
            <person name="Edwards N.J."/>
            <person name="Bolanos R."/>
            <person name="Fasulo D."/>
            <person name="Halldorsson B.V."/>
            <person name="Hannenhalli S."/>
            <person name="Turner R."/>
            <person name="Yooseph S."/>
            <person name="Lu F."/>
            <person name="Nusskern D.R."/>
            <person name="Shue B.C."/>
            <person name="Zheng X.H."/>
            <person name="Zhong F."/>
            <person name="Delcher A.L."/>
            <person name="Huson D.H."/>
            <person name="Kravitz S.A."/>
            <person name="Mouchard L."/>
            <person name="Reinert K."/>
            <person name="Remington K.A."/>
            <person name="Clark A.G."/>
            <person name="Waterman M.S."/>
            <person name="Eichler E.E."/>
            <person name="Adams M.D."/>
            <person name="Hunkapiller M.W."/>
            <person name="Myers E.W."/>
            <person name="Venter J.C."/>
        </authorList>
    </citation>
    <scope>NUCLEOTIDE SEQUENCE [LARGE SCALE GENOMIC DNA]</scope>
</reference>
<reference key="7">
    <citation type="journal article" date="2004" name="Genome Res.">
        <title>The status, quality, and expansion of the NIH full-length cDNA project: the Mammalian Gene Collection (MGC).</title>
        <authorList>
            <consortium name="The MGC Project Team"/>
        </authorList>
    </citation>
    <scope>NUCLEOTIDE SEQUENCE [LARGE SCALE MRNA] (ISOFORM 1)</scope>
    <scope>VARIANT ILE-626</scope>
    <source>
        <tissue>Testis</tissue>
        <tissue>Uterus</tissue>
    </source>
</reference>
<reference key="8">
    <citation type="journal article" date="1999" name="Brain Res. Mol. Brain Res.">
        <title>Neuron-specific splicing of zinc finger transcription factor REST/NRSF/XBR is frequent in neuroblastomas and conserved in human, mouse and rat.</title>
        <authorList>
            <person name="Palm K."/>
            <person name="Metsis M."/>
            <person name="Timmusk T."/>
        </authorList>
    </citation>
    <scope>ALTERNATIVE SPLICING (ISOFORMS 3 AND 4)</scope>
</reference>
<reference key="9">
    <citation type="journal article" date="1999" name="Proc. Natl. Acad. Sci. U.S.A.">
        <title>CoREST: a functional corepressor required for regulation of neural-specific gene expression.</title>
        <authorList>
            <person name="Andres M.E."/>
            <person name="Burger C."/>
            <person name="Peral-Rubio M.J."/>
            <person name="Battaglioli E."/>
            <person name="Anderson M.E."/>
            <person name="Grimes J."/>
            <person name="Dallman J."/>
            <person name="Ballas N."/>
            <person name="Mandel G."/>
        </authorList>
    </citation>
    <scope>FUNCTION</scope>
    <scope>INTERACTION WITH RCOR1</scope>
</reference>
<reference key="10">
    <citation type="journal article" date="2000" name="J. Biol. Chem.">
        <title>The co-repressor mSin3A is a functional component of the REST-CoREST repressor complex.</title>
        <authorList>
            <person name="Grimes J.A."/>
            <person name="Nielsen S.J."/>
            <person name="Battaglioli E."/>
            <person name="Miska E.A."/>
            <person name="Speh J.C."/>
            <person name="Berry D.L."/>
            <person name="Atouf F."/>
            <person name="Holdener B.C."/>
            <person name="Mandel G."/>
            <person name="Kouzarides T."/>
        </authorList>
    </citation>
    <scope>FUNCTION</scope>
    <scope>INTERACTION WITH RCOR1 AND SIN3A</scope>
</reference>
<reference key="11">
    <citation type="journal article" date="2002" name="Biochem. Biophys. Res. Commun.">
        <title>REST4-mediated modulation of REST/NRSF-silencing function during BDNF gene promoter activation.</title>
        <authorList>
            <person name="Tabuchi A."/>
            <person name="Yamada T."/>
            <person name="Sasagawa S."/>
            <person name="Naruse Y."/>
            <person name="Mori N."/>
            <person name="Tsuda M."/>
        </authorList>
    </citation>
    <scope>FUNCTION</scope>
</reference>
<reference key="12">
    <citation type="journal article" date="2002" name="Neurochem. Int.">
        <title>RE-1 silencing transcription factor-4 (REST4) is neither a transcriptional repressor nor a de-repressor.</title>
        <authorList>
            <person name="Magin A."/>
            <person name="Lietz M."/>
            <person name="Cibelli G."/>
            <person name="Thiel G."/>
        </authorList>
    </citation>
    <scope>FUNCTION</scope>
    <scope>SUBCELLULAR LOCATION (ISOFORM 3)</scope>
</reference>
<reference key="13">
    <citation type="journal article" date="2002" name="Science">
        <title>Corepressor-dependent silencing of chromosomal regions encoding neuronal genes.</title>
        <authorList>
            <person name="Lunyak V.V."/>
            <person name="Burgess R."/>
            <person name="Prefontaine G.G."/>
            <person name="Nelson C."/>
            <person name="Sze S.-H."/>
            <person name="Chenoweth J."/>
            <person name="Schwartz P."/>
            <person name="Pevzner P.A."/>
            <person name="Glass C."/>
            <person name="Mandel G."/>
            <person name="Rosenfeld M.G."/>
        </authorList>
    </citation>
    <scope>FUNCTION</scope>
</reference>
<reference key="14">
    <citation type="journal article" date="2003" name="Science">
        <authorList>
            <person name="Lunyak V.V."/>
            <person name="Burgess R."/>
            <person name="Prefontaine G.G."/>
            <person name="Nelson C."/>
            <person name="Sze S.-H."/>
            <person name="Chenoweth J."/>
            <person name="Schwartz P."/>
            <person name="Pevzner P.A."/>
            <person name="Glass C."/>
            <person name="Mandel G."/>
            <person name="Rosenfeld M.G."/>
        </authorList>
    </citation>
    <scope>ERRATUM OF PUBMED:12399542</scope>
</reference>
<reference key="15">
    <citation type="journal article" date="2003" name="Mol. Cell. Biol.">
        <title>REST/NRSF-interacting LIM domain protein, a putative nuclear translocation receptor.</title>
        <authorList>
            <person name="Shimojo M."/>
            <person name="Hersh L.B."/>
        </authorList>
    </citation>
    <scope>INTERACTION WITH PRICKLE1</scope>
    <source>
        <tissue>Brain</tissue>
    </source>
</reference>
<reference key="16">
    <citation type="journal article" date="2006" name="Neurosci. Lett.">
        <title>Characterization of the nuclear targeting signal of REST/NRSF.</title>
        <authorList>
            <person name="Shimojo M."/>
        </authorList>
    </citation>
    <scope>INTERACTION WITH PRICKLE1</scope>
    <scope>SUBCELLULAR LOCATION (ISOFORMS 1; 2; 3 AND 4)</scope>
    <scope>MUTAGENESIS OF 512-LYS--LYS-522</scope>
</reference>
<reference key="17">
    <citation type="journal article" date="2008" name="Mol. Cell">
        <title>CDYL bridges REST and histone methyltransferases for gene repression and suppression of cellular transformation.</title>
        <authorList>
            <person name="Mulligan P."/>
            <person name="Westbrook T.F."/>
            <person name="Ottinger M."/>
            <person name="Pavlova N."/>
            <person name="Chang B."/>
            <person name="Macia E."/>
            <person name="Shi Y.J."/>
            <person name="Barretina J."/>
            <person name="Liu J."/>
            <person name="Howley P.M."/>
            <person name="Elledge S.J."/>
            <person name="Shi Y."/>
        </authorList>
    </citation>
    <scope>FUNCTION</scope>
    <scope>INTERACTION WITH CDYL; EHMT1 AND EHMT2</scope>
    <scope>IDENTIFICATION IN A COMPLEX WITH CDYL; SETB1; EHMT1; EHMT2 AND WIZ</scope>
</reference>
<reference key="18">
    <citation type="journal article" date="2008" name="Nature">
        <title>Control of chromosome stability by the beta-TrCP-REST-Mad2 axis.</title>
        <authorList>
            <person name="Guardavaccaro D."/>
            <person name="Frescas D."/>
            <person name="Dorrello N.V."/>
            <person name="Peschiaroli A."/>
            <person name="Multani A.S."/>
            <person name="Cardozo T."/>
            <person name="Lasorella A."/>
            <person name="Iavarone A."/>
            <person name="Chang S."/>
            <person name="Hernando E."/>
            <person name="Pagano M."/>
        </authorList>
    </citation>
    <scope>INTERACTION WITH FBXW11 AND BTRC</scope>
    <scope>DEVELOPMENTAL STAGE</scope>
    <scope>PHOSPHORYLATION</scope>
    <scope>UBIQUITINATION BY BTRC</scope>
    <scope>MUTAGENESIS OF 1009-GLU--SER-1013</scope>
</reference>
<reference key="19">
    <citation type="journal article" date="2009" name="Anal. Chem.">
        <title>Lys-N and trypsin cover complementary parts of the phosphoproteome in a refined SCX-based approach.</title>
        <authorList>
            <person name="Gauci S."/>
            <person name="Helbig A.O."/>
            <person name="Slijper M."/>
            <person name="Krijgsveld J."/>
            <person name="Heck A.J."/>
            <person name="Mohammed S."/>
        </authorList>
    </citation>
    <scope>IDENTIFICATION BY MASS SPECTROMETRY [LARGE SCALE ANALYSIS]</scope>
</reference>
<reference key="20">
    <citation type="journal article" date="2010" name="Sci. Signal.">
        <title>Quantitative phosphoproteomics reveals widespread full phosphorylation site occupancy during mitosis.</title>
        <authorList>
            <person name="Olsen J.V."/>
            <person name="Vermeulen M."/>
            <person name="Santamaria A."/>
            <person name="Kumar C."/>
            <person name="Miller M.L."/>
            <person name="Jensen L.J."/>
            <person name="Gnad F."/>
            <person name="Cox J."/>
            <person name="Jensen T.S."/>
            <person name="Nigg E.A."/>
            <person name="Brunak S."/>
            <person name="Mann M."/>
        </authorList>
    </citation>
    <scope>PHOSPHORYLATION [LARGE SCALE ANALYSIS] AT SER-864</scope>
    <scope>IDENTIFICATION BY MASS SPECTROMETRY [LARGE SCALE ANALYSIS]</scope>
    <source>
        <tissue>Cervix carcinoma</tissue>
    </source>
</reference>
<reference key="21">
    <citation type="journal article" date="2011" name="J. Mol. Cell. Cardiol.">
        <title>Zinc-finger protein 90 negatively regulates neuron-restrictive silencer factor-mediated transcriptional repression of fetal cardiac genes.</title>
        <authorList>
            <person name="Hata L."/>
            <person name="Murakami M."/>
            <person name="Kuwahara K."/>
            <person name="Nakagawa Y."/>
            <person name="Kinoshita H."/>
            <person name="Usami S."/>
            <person name="Yasuno S."/>
            <person name="Fujiwara M."/>
            <person name="Kuwabara Y."/>
            <person name="Minami T."/>
            <person name="Yamada Y."/>
            <person name="Yamada C."/>
            <person name="Nakao K."/>
            <person name="Ueshima K."/>
            <person name="Nishikimi T."/>
            <person name="Nakao K."/>
        </authorList>
    </citation>
    <scope>INTERACTION WITH ZFP90</scope>
</reference>
<reference key="22">
    <citation type="journal article" date="2011" name="Nat. Cell Biol.">
        <title>Deubiquitylase HAUSP stabilizes REST and promotes maintenance of neural progenitor cells.</title>
        <authorList>
            <person name="Huang Z."/>
            <person name="Wu Q."/>
            <person name="Guryanova O.A."/>
            <person name="Cheng L."/>
            <person name="Shou W."/>
            <person name="Rich J.N."/>
            <person name="Bao S."/>
        </authorList>
    </citation>
    <scope>FUNCTION</scope>
    <scope>INTERACTION WITH USP7</scope>
    <scope>SUBCELLULAR LOCATION</scope>
    <scope>TISSUE SPECIFICITY</scope>
    <scope>INDUCTION</scope>
    <scope>UBIQUITINATION BY BTRC</scope>
    <scope>DEUBIQUITINATION BY USP7</scope>
    <scope>MUTAGENESIS OF SER-313 AND SER-1042</scope>
</reference>
<reference key="23">
    <citation type="journal article" date="2013" name="J. Proteome Res.">
        <title>Toward a comprehensive characterization of a human cancer cell phosphoproteome.</title>
        <authorList>
            <person name="Zhou H."/>
            <person name="Di Palma S."/>
            <person name="Preisinger C."/>
            <person name="Peng M."/>
            <person name="Polat A.N."/>
            <person name="Heck A.J."/>
            <person name="Mohammed S."/>
        </authorList>
    </citation>
    <scope>PHOSPHORYLATION [LARGE SCALE ANALYSIS] AT SER-864</scope>
    <scope>IDENTIFICATION BY MASS SPECTROMETRY [LARGE SCALE ANALYSIS]</scope>
    <source>
        <tissue>Cervix carcinoma</tissue>
        <tissue>Erythroleukemia</tissue>
    </source>
</reference>
<reference key="24">
    <citation type="journal article" date="2014" name="Nature">
        <title>REST and stress resistance in ageing and Alzheimer's disease.</title>
        <authorList>
            <person name="Lu T."/>
            <person name="Aron L."/>
            <person name="Zullo J."/>
            <person name="Pan Y."/>
            <person name="Kim H."/>
            <person name="Chen Y."/>
            <person name="Yang T.H."/>
            <person name="Kim H.M."/>
            <person name="Drake D."/>
            <person name="Liu X.S."/>
            <person name="Bennett D.A."/>
            <person name="Colaiacovo M.P."/>
            <person name="Yankner B.A."/>
        </authorList>
    </citation>
    <scope>FUNCTION</scope>
    <scope>SUBCELLULAR LOCATION</scope>
    <scope>TISSUE SPECIFICITY</scope>
    <scope>DEVELOPMENTAL STAGE</scope>
    <scope>INDUCTION BY WNT SIGNALING; AGING AND OXIDATIVE STRESS</scope>
</reference>
<reference key="25">
    <citation type="journal article" date="2015" name="Sci. Rep.">
        <title>Non-coding RNAs derived from an alternatively spliced REST transcript (REST-003) regulate breast cancer invasiveness.</title>
        <authorList>
            <person name="Lee N.S."/>
            <person name="Evgrafov O.V."/>
            <person name="Souaiaia T."/>
            <person name="Bonyad A."/>
            <person name="Herstein J."/>
            <person name="Lee J.Y."/>
            <person name="Kim J."/>
            <person name="Ning Y."/>
            <person name="Sixto M."/>
            <person name="Weitz A.C."/>
            <person name="Lenz H.J."/>
            <person name="Wang K."/>
            <person name="Knowles J.A."/>
            <person name="Press M.F."/>
            <person name="Salvaterra P.M."/>
            <person name="Shung K.K."/>
            <person name="Chow R.H."/>
        </authorList>
    </citation>
    <scope>FUNCTION</scope>
    <scope>TISSUE SPECIFICITY</scope>
</reference>
<reference key="26">
    <citation type="journal article" date="2016" name="Sci. Rep.">
        <title>REST is a hypoxia-responsive transcriptional repressor.</title>
        <authorList>
            <person name="Cavadas M.A."/>
            <person name="Mesnieres M."/>
            <person name="Crifo B."/>
            <person name="Manresa M.C."/>
            <person name="Selfridge A.C."/>
            <person name="Keogh C.E."/>
            <person name="Fabian Z."/>
            <person name="Scholz C.C."/>
            <person name="Nolan K.A."/>
            <person name="Rocha L.M."/>
            <person name="Tambuwala M.M."/>
            <person name="Brown S."/>
            <person name="Wdowicz A."/>
            <person name="Corbett D."/>
            <person name="Murphy K.J."/>
            <person name="Godson C."/>
            <person name="Cummins E.P."/>
            <person name="Taylor C.T."/>
            <person name="Cheong A."/>
        </authorList>
    </citation>
    <scope>FUNCTION</scope>
    <scope>SUBCELLULAR LOCATION</scope>
</reference>
<reference key="27">
    <citation type="journal article" date="2019" name="Neurosci. Lett.">
        <title>Loss of nuclear REST/NRSF in aged-dopaminergic neurons in Parkinson's disease patients.</title>
        <authorList>
            <person name="Kawamura M."/>
            <person name="Sato S."/>
            <person name="Matsumoto G."/>
            <person name="Fukuda T."/>
            <person name="Shiba-Fukushima K."/>
            <person name="Noda S."/>
            <person name="Takanashi M."/>
            <person name="Mori N."/>
            <person name="Hattori N."/>
        </authorList>
    </citation>
    <scope>SUBCELLULAR LOCATION</scope>
    <scope>TISSUE SPECIFICITY</scope>
</reference>
<reference key="28">
    <citation type="journal article" date="2005" name="J. Mol. Biol.">
        <title>The neural repressor NRSF/REST binds the PAH1 domain of the Sin3 corepressor by using its distinct short hydrophobic helix.</title>
        <authorList>
            <person name="Nomura M."/>
            <person name="Uda-Tochio H."/>
            <person name="Murai K."/>
            <person name="Mori N."/>
            <person name="Nishimura Y."/>
        </authorList>
    </citation>
    <scope>STRUCTURE BY NMR OF 43-57 IN COMPLEX WITH SIN3B</scope>
    <scope>INTERACTION WITH SIN3B</scope>
</reference>
<reference key="29">
    <citation type="journal article" date="2015" name="Nat. Genet.">
        <title>Mutations in the transcriptional repressor REST predispose to Wilms tumor.</title>
        <authorList>
            <person name="Mahamdallie S.S."/>
            <person name="Hanks S."/>
            <person name="Karlin K.L."/>
            <person name="Zachariou A."/>
            <person name="Perdeaux E.R."/>
            <person name="Ruark E."/>
            <person name="Shaw C.A."/>
            <person name="Renwick A."/>
            <person name="Ramsay E."/>
            <person name="Yost S."/>
            <person name="Elliott A."/>
            <person name="Birch J."/>
            <person name="Capra M."/>
            <person name="Gray J."/>
            <person name="Hale J."/>
            <person name="Kingston J."/>
            <person name="Levitt G."/>
            <person name="McLean T."/>
            <person name="Sheridan E."/>
            <person name="Renwick A."/>
            <person name="Seal S."/>
            <person name="Stiller C."/>
            <person name="Sebire N."/>
            <person name="Westbrook T.F."/>
            <person name="Rahman N."/>
        </authorList>
    </citation>
    <scope>INVOLVEMENT IN WT6</scope>
    <scope>VARIANTS WT6 PRO-160; TYR-290; ARG-322 AND GLN-412</scope>
    <scope>CHARACTERIZATION OF VARIANT PRO-160; TYR-290 AND ARG-322</scope>
    <scope>FUNCTION</scope>
    <scope>MUTAGENESIS OF GLU-91; MET-420; SER-593; ALA-642 AND HIS-918</scope>
</reference>
<reference key="30">
    <citation type="journal article" date="2017" name="Am. J. Hum. Genet.">
        <title>REST final-exon-truncating mutations cause hereditary gingival fibromatosis.</title>
        <authorList>
            <consortium name="Baylor-Hopkins Center for Mendelian Genomics"/>
            <person name="Bayram Y."/>
            <person name="White J.J."/>
            <person name="Elcioglu N."/>
            <person name="Cho M.T."/>
            <person name="Zadeh N."/>
            <person name="Gedikbasi A."/>
            <person name="Palanduz S."/>
            <person name="Ozturk S."/>
            <person name="Cefle K."/>
            <person name="Kasapcopur O."/>
            <person name="Coban Akdemir Z."/>
            <person name="Pehlivan D."/>
            <person name="Begtrup A."/>
            <person name="Carvalho C.M.B."/>
            <person name="Paine I.S."/>
            <person name="Mentes A."/>
            <person name="Bektas-Kayhan K."/>
            <person name="Karaca E."/>
            <person name="Jhangiani S.N."/>
            <person name="Muzny D.M."/>
            <person name="Gibbs R.A."/>
            <person name="Lupski J.R."/>
        </authorList>
    </citation>
    <scope>INVOLVEMENT IN GINGF5</scope>
    <scope>VARIANT GINGF5 437-LEU--GLU-1097 DEL</scope>
</reference>
<reference key="31">
    <citation type="journal article" date="2018" name="Cell">
        <title>Defects in the Alternative Splicing-Dependent Regulation of REST Cause Deafness.</title>
        <authorList>
            <person name="Nakano Y."/>
            <person name="Kelly M.C."/>
            <person name="Rehman A.U."/>
            <person name="Boger E.T."/>
            <person name="Morell R.J."/>
            <person name="Kelley M.W."/>
            <person name="Friedman T.B."/>
            <person name="Banfi B."/>
        </authorList>
    </citation>
    <scope>INVOLVEMENT IN DFNA27</scope>
    <scope>ALTERNATIVE SPLICING (ISOFORM 3)</scope>
</reference>
<name>REST_HUMAN</name>
<feature type="chain" id="PRO_0000269547" description="RE1-silencing transcription factor">
    <location>
        <begin position="1"/>
        <end position="1097"/>
    </location>
</feature>
<feature type="zinc finger region" description="C2H2-type 1" evidence="3">
    <location>
        <begin position="159"/>
        <end position="181"/>
    </location>
</feature>
<feature type="zinc finger region" description="C2H2-type 2" evidence="3">
    <location>
        <begin position="216"/>
        <end position="238"/>
    </location>
</feature>
<feature type="zinc finger region" description="C2H2-type 3" evidence="3">
    <location>
        <begin position="248"/>
        <end position="270"/>
    </location>
</feature>
<feature type="zinc finger region" description="C2H2-type 4" evidence="3">
    <location>
        <begin position="276"/>
        <end position="298"/>
    </location>
</feature>
<feature type="zinc finger region" description="C2H2-type 5" evidence="3">
    <location>
        <begin position="304"/>
        <end position="326"/>
    </location>
</feature>
<feature type="zinc finger region" description="C2H2-type 6" evidence="3">
    <location>
        <begin position="332"/>
        <end position="355"/>
    </location>
</feature>
<feature type="zinc finger region" description="C2H2-type 7" evidence="3">
    <location>
        <begin position="361"/>
        <end position="383"/>
    </location>
</feature>
<feature type="zinc finger region" description="C2H2-type 8" evidence="3">
    <location>
        <begin position="389"/>
        <end position="412"/>
    </location>
</feature>
<feature type="zinc finger region" description="C2H2-type 9" evidence="3">
    <location>
        <begin position="1060"/>
        <end position="1082"/>
    </location>
</feature>
<feature type="region of interest" description="Interaction with SIN3A" evidence="6">
    <location>
        <begin position="32"/>
        <end position="122"/>
    </location>
</feature>
<feature type="region of interest" description="Interaction with SIN3B" evidence="12">
    <location>
        <begin position="43"/>
        <end position="57"/>
    </location>
</feature>
<feature type="region of interest" description="Disordered" evidence="4">
    <location>
        <begin position="83"/>
        <end position="103"/>
    </location>
</feature>
<feature type="region of interest" description="Disordered" evidence="4">
    <location>
        <begin position="127"/>
        <end position="159"/>
    </location>
</feature>
<feature type="region of interest" description="Interaction with ZFP90" evidence="17">
    <location>
        <begin position="145"/>
        <end position="418"/>
    </location>
</feature>
<feature type="region of interest" description="Required for binding to the neuron-restrictive silencer element" evidence="2">
    <location>
        <begin position="201"/>
        <end position="212"/>
    </location>
</feature>
<feature type="region of interest" description="Disordered" evidence="4">
    <location>
        <begin position="452"/>
        <end position="642"/>
    </location>
</feature>
<feature type="region of interest" description="Disordered" evidence="4">
    <location>
        <begin position="774"/>
        <end position="837"/>
    </location>
</feature>
<feature type="region of interest" description="Disordered" evidence="4">
    <location>
        <begin position="853"/>
        <end position="938"/>
    </location>
</feature>
<feature type="region of interest" description="Disordered" evidence="4">
    <location>
        <begin position="961"/>
        <end position="1049"/>
    </location>
</feature>
<feature type="region of interest" description="Interaction with RCOR1" evidence="5">
    <location>
        <begin position="1009"/>
        <end position="1087"/>
    </location>
</feature>
<feature type="compositionally biased region" description="Acidic residues" evidence="4">
    <location>
        <begin position="86"/>
        <end position="96"/>
    </location>
</feature>
<feature type="compositionally biased region" description="Basic and acidic residues" evidence="4">
    <location>
        <begin position="452"/>
        <end position="479"/>
    </location>
</feature>
<feature type="compositionally biased region" description="Polar residues" evidence="4">
    <location>
        <begin position="480"/>
        <end position="490"/>
    </location>
</feature>
<feature type="compositionally biased region" description="Basic and acidic residues" evidence="4">
    <location>
        <begin position="495"/>
        <end position="504"/>
    </location>
</feature>
<feature type="compositionally biased region" description="Basic and acidic residues" evidence="4">
    <location>
        <begin position="559"/>
        <end position="570"/>
    </location>
</feature>
<feature type="compositionally biased region" description="Basic residues" evidence="4">
    <location>
        <begin position="577"/>
        <end position="593"/>
    </location>
</feature>
<feature type="compositionally biased region" description="Basic and acidic residues" evidence="4">
    <location>
        <begin position="803"/>
        <end position="836"/>
    </location>
</feature>
<feature type="compositionally biased region" description="Polar residues" evidence="4">
    <location>
        <begin position="913"/>
        <end position="930"/>
    </location>
</feature>
<feature type="modified residue" description="Phosphoserine" evidence="32 33">
    <location>
        <position position="864"/>
    </location>
</feature>
<feature type="modified residue" description="Phosphoserine" evidence="1">
    <location>
        <position position="971"/>
    </location>
</feature>
<feature type="splice variant" id="VSP_022064" description="In isoform 2." evidence="30">
    <original>ERPYKCELCPYSS</original>
    <variation>KRSFLVHKFSSLF</variation>
    <location>
        <begin position="301"/>
        <end position="313"/>
    </location>
</feature>
<feature type="splice variant" id="VSP_022067" description="In isoform 4." evidence="31">
    <location>
        <begin position="304"/>
        <end position="326"/>
    </location>
</feature>
<feature type="splice variant" id="VSP_022065" description="In isoform 2." evidence="30">
    <location>
        <begin position="314"/>
        <end position="1097"/>
    </location>
</feature>
<feature type="splice variant" id="VSP_022066" description="In isoform 3." evidence="31">
    <original>E</original>
    <variation>W</variation>
    <location>
        <position position="329"/>
    </location>
</feature>
<feature type="splice variant" id="VSP_022068" description="In isoform 3." evidence="31">
    <location>
        <begin position="330"/>
        <end position="1097"/>
    </location>
</feature>
<feature type="sequence variant" id="VAR_076333" description="In WT6; inhibits transcriptional repression activity." evidence="20">
    <original>R</original>
    <variation>P</variation>
    <location>
        <position position="160"/>
    </location>
</feature>
<feature type="sequence variant" id="VAR_076334" description="In WT6; inhibits transcriptional repression activity." evidence="20">
    <original>N</original>
    <variation>Y</variation>
    <location>
        <position position="290"/>
    </location>
</feature>
<feature type="sequence variant" id="VAR_076335" description="In WT6; inhibits transcriptional repression activity; dbSNP:rs869025312." evidence="20">
    <original>H</original>
    <variation>R</variation>
    <location>
        <position position="322"/>
    </location>
</feature>
<feature type="sequence variant" id="VAR_076336" description="In WT6." evidence="20">
    <original>H</original>
    <variation>Q</variation>
    <location>
        <position position="412"/>
    </location>
</feature>
<feature type="sequence variant" id="VAR_079529" description="In GINGF5." evidence="22">
    <location>
        <begin position="437"/>
        <end position="1097"/>
    </location>
</feature>
<feature type="sequence variant" id="VAR_029795" description="In dbSNP:rs2228991." evidence="11">
    <original>V</original>
    <variation>I</variation>
    <location>
        <position position="626"/>
    </location>
</feature>
<feature type="sequence variant" id="VAR_029796" description="In dbSNP:rs2227902.">
    <original>E</original>
    <variation>D</variation>
    <location>
        <position position="692"/>
    </location>
</feature>
<feature type="sequence variant" id="VAR_029797" description="In dbSNP:rs2227903.">
    <original>K</original>
    <variation>Q</variation>
    <location>
        <position position="762"/>
    </location>
</feature>
<feature type="sequence variant" id="VAR_029798" description="In dbSNP:rs3796529." evidence="27">
    <original>P</original>
    <variation>L</variation>
    <location>
        <position position="797"/>
    </location>
</feature>
<feature type="mutagenesis site" description="Does not change transcriptional repression activity." evidence="20">
    <original>E</original>
    <variation>G</variation>
    <location>
        <position position="91"/>
    </location>
</feature>
<feature type="mutagenesis site" description="Lack of deubiquitination by USP7." evidence="16">
    <original>S</original>
    <variation>A</variation>
    <location>
        <position position="313"/>
    </location>
</feature>
<feature type="mutagenesis site" description="Inhibits transcriptional repression activity." evidence="20">
    <original>M</original>
    <variation>T</variation>
    <location>
        <position position="420"/>
    </location>
</feature>
<feature type="mutagenesis site" description="No effect on nuclear localization." evidence="13">
    <original>KFSKTKKSKRK</original>
    <variation>AFSKTADSMDA</variation>
    <location>
        <begin position="512"/>
        <end position="522"/>
    </location>
</feature>
<feature type="mutagenesis site" description="Reduced nuclear localization." evidence="13">
    <original>KFSKTKKSKRK</original>
    <variation>GS</variation>
    <location>
        <begin position="512"/>
        <end position="522"/>
    </location>
</feature>
<feature type="mutagenesis site" description="No effect on nuclear localization." evidence="13">
    <location>
        <begin position="512"/>
        <end position="522"/>
    </location>
</feature>
<feature type="mutagenesis site" description="Does not change transcriptional repression activity." evidence="20">
    <original>S</original>
    <variation>N</variation>
    <location>
        <position position="593"/>
    </location>
</feature>
<feature type="mutagenesis site" description="Does not change transcriptional repression activity." evidence="20">
    <original>A</original>
    <variation>T</variation>
    <location>
        <position position="642"/>
    </location>
</feature>
<feature type="mutagenesis site" description="Does not change transcriptional repression activity." evidence="20">
    <original>H</original>
    <variation>Y</variation>
    <location>
        <position position="918"/>
    </location>
</feature>
<feature type="mutagenesis site" description="Loss of interaction with BTRC. Reduced ubiquitination. Decreased proteasomal degradation in G2. Decreased average time from nuclear envelope breakdown to anaphase onset. Increased number of lagging chromosomes and chromosome bridges in anaphase and prematurely separated sister chromatids. Reduced MAD2 levels." evidence="14">
    <original>EGIHS</original>
    <variation>AGIHA</variation>
    <location>
        <begin position="1009"/>
        <end position="1013"/>
    </location>
</feature>
<feature type="mutagenesis site" description="Loss of interaction with BTRC." evidence="14">
    <original>E</original>
    <variation>A</variation>
    <location>
        <position position="1009"/>
    </location>
</feature>
<feature type="mutagenesis site" description="Loss of interaction with BTRC." evidence="14">
    <original>S</original>
    <variation>A</variation>
    <location>
        <position position="1013"/>
    </location>
</feature>
<feature type="mutagenesis site" description="No impact on deubiquitination by USP7." evidence="16">
    <original>S</original>
    <variation>A</variation>
    <location>
        <position position="1042"/>
    </location>
</feature>
<feature type="sequence conflict" description="In Ref. 2; AAC50114." evidence="31" ref="2">
    <original>V</original>
    <variation>L</variation>
    <location>
        <position position="295"/>
    </location>
</feature>
<feature type="sequence conflict" description="In Ref. 2; AAC50115." evidence="31" ref="2">
    <original>PQKE</original>
    <variation>SRNS</variation>
    <location>
        <begin position="596"/>
        <end position="599"/>
    </location>
</feature>
<feature type="sequence conflict" description="In Ref. 1; AAB17211." evidence="31" ref="1">
    <original>P</original>
    <variation>L</variation>
    <location>
        <position position="630"/>
    </location>
</feature>
<feature type="helix" evidence="34">
    <location>
        <begin position="44"/>
        <end position="55"/>
    </location>
</feature>
<sequence>MATQVMGQSSGGGGLFTSSGNIGMALPNDMYDLHDLSKAELAAPQLIMLANVALTGEVNGSCCDYLVGEERQMAELMPVGDNNFSDSEEGEGLEESADIKGEPHGLENMELRSLELSVVEPQPVFEASGAPDIYSSNKDLPPETPGAEDKGKSSKTKPFRCKPCQYEAESEEQFVHHIRVHSAKKFFVEESAEKQAKARESGSSTAEEGDFSKGPIRCDRCGYNTNRYDHYTAHLKHHTRAGDNERVYKCIICTYTTVSEYHWRKHLRNHFPRKVYTCGKCNYFSDRKNNYVQHVRTHTGERPYKCELCPYSSSQKTHLTRHMRTHSGEKPFKCDQCSYVASNQHEVTRHARQVHNGPKPLNCPHCDYKTADRSNFKKHVELHVNPRQFNCPVCDYAASKKCNLQYHFKSKHPTCPNKTMDVSKVKLKKTKKREADLPDNITNEKTEIEQTKIKGDVAGKKNEKSVKAEKRDVSKEKKPSNNVSVIQVTTRTRKSVTEVKEMDVHTGSNSEKFSKTKKSKRKLEVDSHSLHGPVNDEESSTKKKKKVESKSKNNSQEVPKGDSKVEENKKQNTCMKKSTKKKTLKNKSSKKSSKPPQKEPVEKGSAQMDPPQMGPAPTEAVQKGPVQVEPPPPMEHAQMEGAQIRPAPDEPVQMEVVQEGPAQKELLPPVEPAQMVGAQIVLAHMELPPPMETAQTEVAQMGPAPMEPAQMEVAQVESAPMQVVQKEPVQMELSPPMEVVQKEPVQIELSPPMEVVQKEPVKIELSPPIEVVQKEPVQMELSPPMGVVQKEPAQREPPPPREPPLHMEPISKKPPLRKDKKEKSNMQSERARKEQVLIEVGLVPVKDSWLLKESVSTEDLSPPSPPLPKENLREEASGDQKLLNTGEGNKEAPLQKVGAEEADESLPGLAANINESTHISSSGQNLNTPEGETLNGKHQTDSIVCEMKMDTDQNTRENLTGINSTVEEPVSPMLPPSAVEEREAVSKTALASPPATMAANESQEIDEDEGIHSHEGSDLSDNMSEGSDDSGLHGARPVPQESSRKNAKEALAVKAAKGDFVCIFCDRSFRKGKDYSKHLNRHLVNVYYLEEAAQGQE</sequence>
<organism>
    <name type="scientific">Homo sapiens</name>
    <name type="common">Human</name>
    <dbReference type="NCBI Taxonomy" id="9606"/>
    <lineage>
        <taxon>Eukaryota</taxon>
        <taxon>Metazoa</taxon>
        <taxon>Chordata</taxon>
        <taxon>Craniata</taxon>
        <taxon>Vertebrata</taxon>
        <taxon>Euteleostomi</taxon>
        <taxon>Mammalia</taxon>
        <taxon>Eutheria</taxon>
        <taxon>Euarchontoglires</taxon>
        <taxon>Primates</taxon>
        <taxon>Haplorrhini</taxon>
        <taxon>Catarrhini</taxon>
        <taxon>Hominidae</taxon>
        <taxon>Homo</taxon>
    </lineage>
</organism>
<accession>Q13127</accession>
<accession>A2RUE0</accession>
<accession>B9EGJ0</accession>
<accession>Q12956</accession>
<accession>Q12957</accession>
<accession>Q13134</accession>
<accession>Q59ER1</accession>
<accession>Q8IWI3</accession>
<dbReference type="EMBL" id="U22314">
    <property type="protein sequence ID" value="AAB17211.1"/>
    <property type="molecule type" value="mRNA"/>
</dbReference>
<dbReference type="EMBL" id="U13877">
    <property type="protein sequence ID" value="AAC50114.1"/>
    <property type="status" value="ALT_INIT"/>
    <property type="molecule type" value="mRNA"/>
</dbReference>
<dbReference type="EMBL" id="U13879">
    <property type="protein sequence ID" value="AAC50115.1"/>
    <property type="status" value="ALT_INIT"/>
    <property type="molecule type" value="mRNA"/>
</dbReference>
<dbReference type="EMBL" id="U22680">
    <property type="protein sequence ID" value="AAA98503.1"/>
    <property type="status" value="ALT_FRAME"/>
    <property type="molecule type" value="mRNA"/>
</dbReference>
<dbReference type="EMBL" id="AB209750">
    <property type="protein sequence ID" value="BAD92987.1"/>
    <property type="status" value="ALT_INIT"/>
    <property type="molecule type" value="mRNA"/>
</dbReference>
<dbReference type="EMBL" id="AC069307">
    <property type="status" value="NOT_ANNOTATED_CDS"/>
    <property type="molecule type" value="Genomic_DNA"/>
</dbReference>
<dbReference type="EMBL" id="CH471057">
    <property type="protein sequence ID" value="EAX05517.1"/>
    <property type="molecule type" value="Genomic_DNA"/>
</dbReference>
<dbReference type="EMBL" id="BC038985">
    <property type="protein sequence ID" value="AAH38985.1"/>
    <property type="status" value="ALT_SEQ"/>
    <property type="molecule type" value="mRNA"/>
</dbReference>
<dbReference type="EMBL" id="BC132859">
    <property type="protein sequence ID" value="AAI32860.1"/>
    <property type="molecule type" value="mRNA"/>
</dbReference>
<dbReference type="EMBL" id="BC136491">
    <property type="protein sequence ID" value="AAI36492.1"/>
    <property type="molecule type" value="mRNA"/>
</dbReference>
<dbReference type="CCDS" id="CCDS3509.1">
    <molecule id="Q13127-1"/>
</dbReference>
<dbReference type="PIR" id="A56138">
    <property type="entry name" value="A56138"/>
</dbReference>
<dbReference type="PIR" id="I38754">
    <property type="entry name" value="I38754"/>
</dbReference>
<dbReference type="PIR" id="I38755">
    <property type="entry name" value="I38755"/>
</dbReference>
<dbReference type="RefSeq" id="NP_001180437.1">
    <molecule id="Q13127-1"/>
    <property type="nucleotide sequence ID" value="NM_001193508.1"/>
</dbReference>
<dbReference type="RefSeq" id="NP_001350382.1">
    <molecule id="Q13127-1"/>
    <property type="nucleotide sequence ID" value="NM_001363453.2"/>
</dbReference>
<dbReference type="RefSeq" id="NP_005603.3">
    <molecule id="Q13127-1"/>
    <property type="nucleotide sequence ID" value="NM_005612.4"/>
</dbReference>
<dbReference type="RefSeq" id="XP_011532703.1">
    <property type="nucleotide sequence ID" value="XM_011534401.2"/>
</dbReference>
<dbReference type="PDB" id="2CZY">
    <property type="method" value="NMR"/>
    <property type="chains" value="B=43-57"/>
</dbReference>
<dbReference type="PDB" id="6DU2">
    <property type="method" value="X-ray"/>
    <property type="resolution" value="2.50 A"/>
    <property type="chains" value="C/D=858-869"/>
</dbReference>
<dbReference type="PDB" id="6DU3">
    <property type="method" value="X-ray"/>
    <property type="resolution" value="2.58 A"/>
    <property type="chains" value="C/D=858-869"/>
</dbReference>
<dbReference type="PDBsum" id="2CZY"/>
<dbReference type="PDBsum" id="6DU2"/>
<dbReference type="PDBsum" id="6DU3"/>
<dbReference type="BMRB" id="Q13127"/>
<dbReference type="SMR" id="Q13127"/>
<dbReference type="BioGRID" id="111910">
    <property type="interactions" value="266"/>
</dbReference>
<dbReference type="CORUM" id="Q13127"/>
<dbReference type="DIP" id="DIP-35264N"/>
<dbReference type="FunCoup" id="Q13127">
    <property type="interactions" value="4087"/>
</dbReference>
<dbReference type="IntAct" id="Q13127">
    <property type="interactions" value="20"/>
</dbReference>
<dbReference type="MINT" id="Q13127"/>
<dbReference type="STRING" id="9606.ENSP00000311816"/>
<dbReference type="GlyGen" id="Q13127">
    <property type="glycosylation" value="2 sites, 1 O-linked glycan (1 site)"/>
</dbReference>
<dbReference type="iPTMnet" id="Q13127"/>
<dbReference type="PhosphoSitePlus" id="Q13127"/>
<dbReference type="BioMuta" id="REST"/>
<dbReference type="DMDM" id="296452989"/>
<dbReference type="jPOST" id="Q13127"/>
<dbReference type="MassIVE" id="Q13127"/>
<dbReference type="PaxDb" id="9606-ENSP00000311816"/>
<dbReference type="PeptideAtlas" id="Q13127"/>
<dbReference type="ProteomicsDB" id="59175">
    <molecule id="Q13127-1"/>
</dbReference>
<dbReference type="ProteomicsDB" id="59176">
    <molecule id="Q13127-2"/>
</dbReference>
<dbReference type="ProteomicsDB" id="59177">
    <molecule id="Q13127-3"/>
</dbReference>
<dbReference type="ProteomicsDB" id="59178">
    <molecule id="Q13127-4"/>
</dbReference>
<dbReference type="Pumba" id="Q13127"/>
<dbReference type="Antibodypedia" id="1755">
    <property type="antibodies" value="289 antibodies from 37 providers"/>
</dbReference>
<dbReference type="DNASU" id="5978"/>
<dbReference type="Ensembl" id="ENST00000309042.12">
    <molecule id="Q13127-1"/>
    <property type="protein sequence ID" value="ENSP00000311816.7"/>
    <property type="gene ID" value="ENSG00000084093.19"/>
</dbReference>
<dbReference type="Ensembl" id="ENST00000675105.1">
    <molecule id="Q13127-1"/>
    <property type="protein sequence ID" value="ENSP00000502313.1"/>
    <property type="gene ID" value="ENSG00000084093.19"/>
</dbReference>
<dbReference type="GeneID" id="5978"/>
<dbReference type="KEGG" id="hsa:5978"/>
<dbReference type="MANE-Select" id="ENST00000309042.12">
    <property type="protein sequence ID" value="ENSP00000311816.7"/>
    <property type="RefSeq nucleotide sequence ID" value="NM_005612.5"/>
    <property type="RefSeq protein sequence ID" value="NP_005603.3"/>
</dbReference>
<dbReference type="UCSC" id="uc003hch.4">
    <molecule id="Q13127-1"/>
    <property type="organism name" value="human"/>
</dbReference>
<dbReference type="AGR" id="HGNC:9966"/>
<dbReference type="CTD" id="5978"/>
<dbReference type="DisGeNET" id="5978"/>
<dbReference type="GeneCards" id="REST"/>
<dbReference type="HGNC" id="HGNC:9966">
    <property type="gene designation" value="REST"/>
</dbReference>
<dbReference type="HPA" id="ENSG00000084093">
    <property type="expression patterns" value="Low tissue specificity"/>
</dbReference>
<dbReference type="MalaCards" id="REST"/>
<dbReference type="MIM" id="600571">
    <property type="type" value="gene"/>
</dbReference>
<dbReference type="MIM" id="612431">
    <property type="type" value="phenotype"/>
</dbReference>
<dbReference type="MIM" id="616806">
    <property type="type" value="phenotype"/>
</dbReference>
<dbReference type="MIM" id="617626">
    <property type="type" value="phenotype"/>
</dbReference>
<dbReference type="neXtProt" id="NX_Q13127"/>
<dbReference type="OpenTargets" id="ENSG00000084093"/>
<dbReference type="Orphanet" id="2024">
    <property type="disease" value="Hereditary gingival fibromatosis"/>
</dbReference>
<dbReference type="Orphanet" id="654">
    <property type="disease" value="Nephroblastoma"/>
</dbReference>
<dbReference type="PharmGKB" id="PA34334"/>
<dbReference type="VEuPathDB" id="HostDB:ENSG00000084093"/>
<dbReference type="eggNOG" id="KOG1721">
    <property type="taxonomic scope" value="Eukaryota"/>
</dbReference>
<dbReference type="GeneTree" id="ENSGT00940000155341"/>
<dbReference type="HOGENOM" id="CLU_009801_2_0_1"/>
<dbReference type="InParanoid" id="Q13127"/>
<dbReference type="OrthoDB" id="427030at2759"/>
<dbReference type="PAN-GO" id="Q13127">
    <property type="GO annotations" value="7 GO annotations based on evolutionary models"/>
</dbReference>
<dbReference type="PhylomeDB" id="Q13127"/>
<dbReference type="TreeFam" id="TF332861"/>
<dbReference type="PathwayCommons" id="Q13127"/>
<dbReference type="Reactome" id="R-HSA-3214815">
    <property type="pathway name" value="HDACs deacetylate histones"/>
</dbReference>
<dbReference type="Reactome" id="R-HSA-8943724">
    <property type="pathway name" value="Regulation of PTEN gene transcription"/>
</dbReference>
<dbReference type="Reactome" id="R-HSA-9031628">
    <property type="pathway name" value="NGF-stimulated transcription"/>
</dbReference>
<dbReference type="Reactome" id="R-HSA-9679191">
    <property type="pathway name" value="Potential therapeutics for SARS"/>
</dbReference>
<dbReference type="Reactome" id="R-HSA-9768777">
    <property type="pathway name" value="Regulation of NPAS4 gene transcription"/>
</dbReference>
<dbReference type="SignaLink" id="Q13127"/>
<dbReference type="SIGNOR" id="Q13127"/>
<dbReference type="BioGRID-ORCS" id="5978">
    <property type="hits" value="49 hits in 1187 CRISPR screens"/>
</dbReference>
<dbReference type="ChiTaRS" id="REST">
    <property type="organism name" value="human"/>
</dbReference>
<dbReference type="GeneWiki" id="RE1-silencing_transcription_factor"/>
<dbReference type="GenomeRNAi" id="5978"/>
<dbReference type="Pharos" id="Q13127">
    <property type="development level" value="Tbio"/>
</dbReference>
<dbReference type="PRO" id="PR:Q13127"/>
<dbReference type="Proteomes" id="UP000005640">
    <property type="component" value="Chromosome 4"/>
</dbReference>
<dbReference type="RNAct" id="Q13127">
    <property type="molecule type" value="protein"/>
</dbReference>
<dbReference type="Bgee" id="ENSG00000084093">
    <property type="expression patterns" value="Expressed in primordial germ cell in gonad and 209 other cell types or tissues"/>
</dbReference>
<dbReference type="ExpressionAtlas" id="Q13127">
    <property type="expression patterns" value="baseline and differential"/>
</dbReference>
<dbReference type="GO" id="GO:0005737">
    <property type="term" value="C:cytoplasm"/>
    <property type="evidence" value="ECO:0000314"/>
    <property type="project" value="UniProtKB"/>
</dbReference>
<dbReference type="GO" id="GO:0005829">
    <property type="term" value="C:cytosol"/>
    <property type="evidence" value="ECO:0000314"/>
    <property type="project" value="HPA"/>
</dbReference>
<dbReference type="GO" id="GO:0005654">
    <property type="term" value="C:nucleoplasm"/>
    <property type="evidence" value="ECO:0000314"/>
    <property type="project" value="HPA"/>
</dbReference>
<dbReference type="GO" id="GO:0005634">
    <property type="term" value="C:nucleus"/>
    <property type="evidence" value="ECO:0000314"/>
    <property type="project" value="UniProtKB"/>
</dbReference>
<dbReference type="GO" id="GO:0017053">
    <property type="term" value="C:transcription repressor complex"/>
    <property type="evidence" value="ECO:0000314"/>
    <property type="project" value="UniProtKB"/>
</dbReference>
<dbReference type="GO" id="GO:0003682">
    <property type="term" value="F:chromatin binding"/>
    <property type="evidence" value="ECO:0000250"/>
    <property type="project" value="UniProtKB"/>
</dbReference>
<dbReference type="GO" id="GO:0003700">
    <property type="term" value="F:DNA-binding transcription factor activity"/>
    <property type="evidence" value="ECO:0000314"/>
    <property type="project" value="UniProtKB"/>
</dbReference>
<dbReference type="GO" id="GO:0001227">
    <property type="term" value="F:DNA-binding transcription repressor activity, RNA polymerase II-specific"/>
    <property type="evidence" value="ECO:0000314"/>
    <property type="project" value="UniProtKB"/>
</dbReference>
<dbReference type="GO" id="GO:0042802">
    <property type="term" value="F:identical protein binding"/>
    <property type="evidence" value="ECO:0000250"/>
    <property type="project" value="UniProtKB"/>
</dbReference>
<dbReference type="GO" id="GO:0000978">
    <property type="term" value="F:RNA polymerase II cis-regulatory region sequence-specific DNA binding"/>
    <property type="evidence" value="ECO:0000314"/>
    <property type="project" value="UniProtKB"/>
</dbReference>
<dbReference type="GO" id="GO:0000979">
    <property type="term" value="F:RNA polymerase II core promoter sequence-specific DNA binding"/>
    <property type="evidence" value="ECO:0007669"/>
    <property type="project" value="Ensembl"/>
</dbReference>
<dbReference type="GO" id="GO:0061629">
    <property type="term" value="F:RNA polymerase II-specific DNA-binding transcription factor binding"/>
    <property type="evidence" value="ECO:0000353"/>
    <property type="project" value="UniProtKB"/>
</dbReference>
<dbReference type="GO" id="GO:0000976">
    <property type="term" value="F:transcription cis-regulatory region binding"/>
    <property type="evidence" value="ECO:0000314"/>
    <property type="project" value="UniProtKB"/>
</dbReference>
<dbReference type="GO" id="GO:0008270">
    <property type="term" value="F:zinc ion binding"/>
    <property type="evidence" value="ECO:0007669"/>
    <property type="project" value="UniProtKB-KW"/>
</dbReference>
<dbReference type="GO" id="GO:0060088">
    <property type="term" value="P:auditory receptor cell stereocilium organization"/>
    <property type="evidence" value="ECO:0000250"/>
    <property type="project" value="UniProtKB"/>
</dbReference>
<dbReference type="GO" id="GO:0060379">
    <property type="term" value="P:cardiac muscle cell myoblast differentiation"/>
    <property type="evidence" value="ECO:0000250"/>
    <property type="project" value="UniProtKB"/>
</dbReference>
<dbReference type="GO" id="GO:0071257">
    <property type="term" value="P:cellular response to electrical stimulus"/>
    <property type="evidence" value="ECO:0000315"/>
    <property type="project" value="UniProtKB"/>
</dbReference>
<dbReference type="GO" id="GO:0071385">
    <property type="term" value="P:cellular response to glucocorticoid stimulus"/>
    <property type="evidence" value="ECO:0000314"/>
    <property type="project" value="UniProtKB"/>
</dbReference>
<dbReference type="GO" id="GO:0033554">
    <property type="term" value="P:cellular response to stress"/>
    <property type="evidence" value="ECO:0007669"/>
    <property type="project" value="Ensembl"/>
</dbReference>
<dbReference type="GO" id="GO:0006338">
    <property type="term" value="P:chromatin remodeling"/>
    <property type="evidence" value="ECO:0000250"/>
    <property type="project" value="UniProtKB"/>
</dbReference>
<dbReference type="GO" id="GO:0050910">
    <property type="term" value="P:detection of mechanical stimulus involved in sensory perception of sound"/>
    <property type="evidence" value="ECO:0000250"/>
    <property type="project" value="UniProtKB"/>
</dbReference>
<dbReference type="GO" id="GO:0002244">
    <property type="term" value="P:hematopoietic progenitor cell differentiation"/>
    <property type="evidence" value="ECO:0007669"/>
    <property type="project" value="Ensembl"/>
</dbReference>
<dbReference type="GO" id="GO:0099563">
    <property type="term" value="P:modification of synaptic structure"/>
    <property type="evidence" value="ECO:0000250"/>
    <property type="project" value="UniProtKB"/>
</dbReference>
<dbReference type="GO" id="GO:0043922">
    <property type="term" value="P:negative regulation by host of viral transcription"/>
    <property type="evidence" value="ECO:0000314"/>
    <property type="project" value="UniProtKB"/>
</dbReference>
<dbReference type="GO" id="GO:0032348">
    <property type="term" value="P:negative regulation of aldosterone biosynthetic process"/>
    <property type="evidence" value="ECO:0000315"/>
    <property type="project" value="UniProtKB"/>
</dbReference>
<dbReference type="GO" id="GO:2000798">
    <property type="term" value="P:negative regulation of amniotic stem cell differentiation"/>
    <property type="evidence" value="ECO:0000315"/>
    <property type="project" value="UniProtKB"/>
</dbReference>
<dbReference type="GO" id="GO:0045955">
    <property type="term" value="P:negative regulation of calcium ion-dependent exocytosis"/>
    <property type="evidence" value="ECO:0000250"/>
    <property type="project" value="UniProtKB"/>
</dbReference>
<dbReference type="GO" id="GO:2000065">
    <property type="term" value="P:negative regulation of cortisol biosynthetic process"/>
    <property type="evidence" value="ECO:0000315"/>
    <property type="project" value="UniProtKB"/>
</dbReference>
<dbReference type="GO" id="GO:2000706">
    <property type="term" value="P:negative regulation of dense core granule biogenesis"/>
    <property type="evidence" value="ECO:0000250"/>
    <property type="project" value="UniProtKB"/>
</dbReference>
<dbReference type="GO" id="GO:0045892">
    <property type="term" value="P:negative regulation of DNA-templated transcription"/>
    <property type="evidence" value="ECO:0000314"/>
    <property type="project" value="UniProtKB"/>
</dbReference>
<dbReference type="GO" id="GO:0010629">
    <property type="term" value="P:negative regulation of gene expression"/>
    <property type="evidence" value="ECO:0000250"/>
    <property type="project" value="UniProtKB"/>
</dbReference>
<dbReference type="GO" id="GO:0046676">
    <property type="term" value="P:negative regulation of insulin secretion"/>
    <property type="evidence" value="ECO:0000315"/>
    <property type="project" value="UniProtKB"/>
</dbReference>
<dbReference type="GO" id="GO:2000740">
    <property type="term" value="P:negative regulation of mesenchymal stem cell differentiation"/>
    <property type="evidence" value="ECO:0000315"/>
    <property type="project" value="UniProtKB"/>
</dbReference>
<dbReference type="GO" id="GO:1902894">
    <property type="term" value="P:negative regulation of miRNA transcription"/>
    <property type="evidence" value="ECO:0000315"/>
    <property type="project" value="BHF-UCL"/>
</dbReference>
<dbReference type="GO" id="GO:0050768">
    <property type="term" value="P:negative regulation of neurogenesis"/>
    <property type="evidence" value="ECO:0000250"/>
    <property type="project" value="UniProtKB"/>
</dbReference>
<dbReference type="GO" id="GO:0045665">
    <property type="term" value="P:negative regulation of neuron differentiation"/>
    <property type="evidence" value="ECO:0000314"/>
    <property type="project" value="UniProtKB"/>
</dbReference>
<dbReference type="GO" id="GO:0000122">
    <property type="term" value="P:negative regulation of transcription by RNA polymerase II"/>
    <property type="evidence" value="ECO:0000314"/>
    <property type="project" value="UniProtKB"/>
</dbReference>
<dbReference type="GO" id="GO:0050877">
    <property type="term" value="P:nervous system process"/>
    <property type="evidence" value="ECO:0000315"/>
    <property type="project" value="UniProtKB"/>
</dbReference>
<dbReference type="GO" id="GO:0050885">
    <property type="term" value="P:neuromuscular process controlling balance"/>
    <property type="evidence" value="ECO:0000250"/>
    <property type="project" value="UniProtKB"/>
</dbReference>
<dbReference type="GO" id="GO:0097150">
    <property type="term" value="P:neuronal stem cell population maintenance"/>
    <property type="evidence" value="ECO:0000250"/>
    <property type="project" value="UniProtKB"/>
</dbReference>
<dbReference type="GO" id="GO:0045893">
    <property type="term" value="P:positive regulation of DNA-templated transcription"/>
    <property type="evidence" value="ECO:0000314"/>
    <property type="project" value="UniProtKB"/>
</dbReference>
<dbReference type="GO" id="GO:0010628">
    <property type="term" value="P:positive regulation of gene expression"/>
    <property type="evidence" value="ECO:0000250"/>
    <property type="project" value="UniProtKB"/>
</dbReference>
<dbReference type="GO" id="GO:0045666">
    <property type="term" value="P:positive regulation of neuron differentiation"/>
    <property type="evidence" value="ECO:0000250"/>
    <property type="project" value="UniProtKB"/>
</dbReference>
<dbReference type="GO" id="GO:0043068">
    <property type="term" value="P:positive regulation of programmed cell death"/>
    <property type="evidence" value="ECO:0000250"/>
    <property type="project" value="UniProtKB"/>
</dbReference>
<dbReference type="GO" id="GO:1902459">
    <property type="term" value="P:positive regulation of stem cell population maintenance"/>
    <property type="evidence" value="ECO:0000314"/>
    <property type="project" value="UniProtKB"/>
</dbReference>
<dbReference type="GO" id="GO:0045944">
    <property type="term" value="P:positive regulation of transcription by RNA polymerase II"/>
    <property type="evidence" value="ECO:0000318"/>
    <property type="project" value="GO_Central"/>
</dbReference>
<dbReference type="GO" id="GO:0000381">
    <property type="term" value="P:regulation of alternative mRNA splicing, via spliceosome"/>
    <property type="evidence" value="ECO:0000250"/>
    <property type="project" value="UniProtKB"/>
</dbReference>
<dbReference type="GO" id="GO:0006355">
    <property type="term" value="P:regulation of DNA-templated transcription"/>
    <property type="evidence" value="ECO:0000314"/>
    <property type="project" value="UniProtKB"/>
</dbReference>
<dbReference type="GO" id="GO:0045667">
    <property type="term" value="P:regulation of osteoblast differentiation"/>
    <property type="evidence" value="ECO:0000250"/>
    <property type="project" value="UniProtKB"/>
</dbReference>
<dbReference type="GO" id="GO:0001666">
    <property type="term" value="P:response to hypoxia"/>
    <property type="evidence" value="ECO:0000314"/>
    <property type="project" value="UniProtKB"/>
</dbReference>
<dbReference type="GO" id="GO:0002931">
    <property type="term" value="P:response to ischemia"/>
    <property type="evidence" value="ECO:0000250"/>
    <property type="project" value="UniProtKB"/>
</dbReference>
<dbReference type="GO" id="GO:0035019">
    <property type="term" value="P:somatic stem cell population maintenance"/>
    <property type="evidence" value="ECO:0000250"/>
    <property type="project" value="UniProtKB"/>
</dbReference>
<dbReference type="FunFam" id="3.30.160.60:FF:002187">
    <property type="entry name" value="RE1-silencing transcription factor"/>
    <property type="match status" value="1"/>
</dbReference>
<dbReference type="FunFam" id="3.30.160.60:FF:000448">
    <property type="entry name" value="RE1-silencing transcription factor A"/>
    <property type="match status" value="1"/>
</dbReference>
<dbReference type="FunFam" id="3.30.160.60:FF:000662">
    <property type="entry name" value="RE1-silencing transcription factor A"/>
    <property type="match status" value="1"/>
</dbReference>
<dbReference type="FunFam" id="3.30.160.60:FF:000805">
    <property type="entry name" value="RE1-silencing transcription factor B"/>
    <property type="match status" value="1"/>
</dbReference>
<dbReference type="FunFam" id="3.30.160.60:FF:000952">
    <property type="entry name" value="RE1-silencing transcription factor B"/>
    <property type="match status" value="1"/>
</dbReference>
<dbReference type="Gene3D" id="3.30.160.60">
    <property type="entry name" value="Classic Zinc Finger"/>
    <property type="match status" value="5"/>
</dbReference>
<dbReference type="IDEAL" id="IID00169"/>
<dbReference type="InterPro" id="IPR050688">
    <property type="entry name" value="Zinc_finger/UBP_domain"/>
</dbReference>
<dbReference type="InterPro" id="IPR036236">
    <property type="entry name" value="Znf_C2H2_sf"/>
</dbReference>
<dbReference type="InterPro" id="IPR013087">
    <property type="entry name" value="Znf_C2H2_type"/>
</dbReference>
<dbReference type="PANTHER" id="PTHR24403:SF102">
    <property type="entry name" value="RE1-SILENCING TRANSCRIPTION FACTOR"/>
    <property type="match status" value="1"/>
</dbReference>
<dbReference type="PANTHER" id="PTHR24403">
    <property type="entry name" value="ZINC FINGER PROTEIN"/>
    <property type="match status" value="1"/>
</dbReference>
<dbReference type="Pfam" id="PF00096">
    <property type="entry name" value="zf-C2H2"/>
    <property type="match status" value="1"/>
</dbReference>
<dbReference type="Pfam" id="PF24540">
    <property type="entry name" value="zf-C2H2_REST"/>
    <property type="match status" value="1"/>
</dbReference>
<dbReference type="SMART" id="SM00355">
    <property type="entry name" value="ZnF_C2H2"/>
    <property type="match status" value="9"/>
</dbReference>
<dbReference type="SUPFAM" id="SSF57667">
    <property type="entry name" value="beta-beta-alpha zinc fingers"/>
    <property type="match status" value="3"/>
</dbReference>
<dbReference type="PROSITE" id="PS00028">
    <property type="entry name" value="ZINC_FINGER_C2H2_1"/>
    <property type="match status" value="1"/>
</dbReference>
<dbReference type="PROSITE" id="PS50157">
    <property type="entry name" value="ZINC_FINGER_C2H2_2"/>
    <property type="match status" value="6"/>
</dbReference>
<keyword id="KW-0002">3D-structure</keyword>
<keyword id="KW-0025">Alternative splicing</keyword>
<keyword id="KW-0963">Cytoplasm</keyword>
<keyword id="KW-0209">Deafness</keyword>
<keyword id="KW-0225">Disease variant</keyword>
<keyword id="KW-0479">Metal-binding</keyword>
<keyword id="KW-1010">Non-syndromic deafness</keyword>
<keyword id="KW-0539">Nucleus</keyword>
<keyword id="KW-0597">Phosphoprotein</keyword>
<keyword id="KW-1267">Proteomics identification</keyword>
<keyword id="KW-1185">Reference proteome</keyword>
<keyword id="KW-0677">Repeat</keyword>
<keyword id="KW-0678">Repressor</keyword>
<keyword id="KW-0804">Transcription</keyword>
<keyword id="KW-0805">Transcription regulation</keyword>
<keyword id="KW-0832">Ubl conjugation</keyword>
<keyword id="KW-0862">Zinc</keyword>
<keyword id="KW-0863">Zinc-finger</keyword>
<comment type="function">
    <text evidence="1 2 5 6 7 8 9 15 16 18 19 20 21 25 26 27">Transcriptional repressor which binds neuron-restrictive silencer element (NRSE) and represses neuronal gene transcription in non-neuronal cells (PubMed:11741002, PubMed:11779185, PubMed:12399542, PubMed:26551668, PubMed:7697725, PubMed:7871435, PubMed:8568247). Restricts the expression of neuronal genes by associating with two distinct corepressors, SIN3A and RCOR1, which in turn recruit histone deacetylase to the promoters of REST-regulated genes (PubMed:10449787, PubMed:10734093). Mediates repression by recruiting the BHC complex at RE1/NRSE sites which acts by deacetylating and demethylating specific sites on histones, thereby acting as a chromatin modifier (By similarity). Transcriptional repression by REST-CDYL via the recruitment of histone methyltransferase EHMT2 may be important in transformation suppression (PubMed:19061646). Represses the expression of SRRM4 in non-neural cells to prevent the activation of neural-specific splicing events and to prevent production of REST isoform 3 (By similarity). Repressor activity may be inhibited by forming heterodimers with isoform 3, thereby preventing binding to NRSE or binding to corepressors and leading to derepression of target genes (PubMed:11779185). Also maintains repression of neuronal genes in neural stem cells, and allows transcription and differentiation into neurons by dissociation from RE1/NRSE sites of target genes (By similarity). Thereby is involved in maintaining the quiescent state of adult neural stem cells and preventing premature differentiation into mature neurons (PubMed:21258371). Plays a role in the developmental switch in synaptic NMDA receptor composition during postnatal development, by repressing GRIN2B expression and thereby altering NMDA receptor properties from containing primarily GRIN2B to primarily GRIN2A subunits (By similarity). Acts as a regulator of osteoblast differentiation (By similarity). Key repressor of gene expression in hypoxia; represses genes in hypoxia by direct binding to an RE1/NRSE site on their promoter regions (PubMed:27531581). May also function in stress resistance in the brain during aging; possibly by regulating expression of genes involved in cell death and in the stress response (PubMed:24670762). Repressor of gene expression in the hippocampus after ischemia by directly binding to RE1/NRSE sites and recruiting SIN3A and RCOR1 to promoters of target genes, thereby promoting changes in chromatin modifications and ischemia-induced cell death (By similarity). After ischemia, might play a role in repression of miR-132 expression in hippocampal neurons, thereby leading to neuronal cell death (By similarity). Negatively regulates the expression of SRRM3 in breast cancer cell lines (PubMed:26053433).</text>
</comment>
<comment type="function">
    <molecule>Isoform 3</molecule>
    <text evidence="2 7 8">Binds to the 3' region of the neuron-restrictive silencer element (NRSE), with lower affinity than full-length REST isoform 1 (By similarity). Exhibits weaker repressor activity compared to isoform 1 (PubMed:11779185). May negatively regulate the repressor activity of isoform 1 by binding to isoform 1, thereby preventing its binding to NRSE and leading to derepression of target genes (PubMed:11779185). However, in another study, does not appear to be implicated in repressor activity of a NRSE motif-containing reporter construct nor in inhibitory activity on the isoform 1 transcriptional repressor activity (PubMed:11741002). Post-transcriptional inactivation of REST by SRRM4-dependent alternative splicing into isoform 3 is required in mechanosensory hair cells in the inner ear for derepression of neuronal genes and hearing (By similarity).</text>
</comment>
<comment type="subunit">
    <text evidence="2 5 6 10 12 13 14 15 16 17">Isoform 1 and isoform 3 form heterodimers (By similarity). Isoform 3: Forms homodimers and homooligomers; binds to the neuron-restrictive silencer element (NRSE) as monomer (By similarity). Interacts with SIN3A, SIN3B and RCOR1 (PubMed:10449787, PubMed:10734093, PubMed:16288918). Interacts with CDYL (PubMed:19061646). Interacts with EHMT1 and EHMT2 only in the presence of CDYL (PubMed:19061646). Part of a complex containing at least CDYL, REST, WIZ, SETB1, EHMT1 and EHMT2 (PubMed:19061646). Interacts (via zinc-finger DNA-binding domain) with ZFP90 (via N- and C-termini); the interaction inhibits REST repressor activity (PubMed:21284946). Interacts (via C2H2-type zinc finger 5) with PRICKLE1 (PubMed:14645515, PubMed:16442230). Interacts with FBXW11 and BTRC (PubMed:18354482). Interacts with USP7 (PubMed:21258371).</text>
</comment>
<comment type="interaction">
    <interactant intactId="EBI-926706">
        <id>Q13127</id>
    </interactant>
    <interactant intactId="EBI-307461">
        <id>Q9Y297</id>
        <label>BTRC</label>
    </interactant>
    <organismsDiffer>false</organismsDiffer>
    <experiments>10</experiments>
</comment>
<comment type="interaction">
    <interactant intactId="EBI-926706">
        <id>Q13127</id>
    </interactant>
    <interactant intactId="EBI-355189">
        <id>Q9UKB1</id>
        <label>FBXW11</label>
    </interactant>
    <organismsDiffer>false</organismsDiffer>
    <experiments>3</experiments>
</comment>
<comment type="interaction">
    <interactant intactId="EBI-926706">
        <id>Q13127</id>
    </interactant>
    <interactant intactId="EBI-296047">
        <id>P07900</id>
        <label>HSP90AA1</label>
    </interactant>
    <organismsDiffer>false</organismsDiffer>
    <experiments>4</experiments>
</comment>
<comment type="interaction">
    <interactant intactId="EBI-926706">
        <id>Q13127</id>
    </interactant>
    <interactant intactId="EBI-1246541">
        <id>P41229</id>
        <label>KDM5C</label>
    </interactant>
    <organismsDiffer>false</organismsDiffer>
    <experiments>3</experiments>
</comment>
<comment type="interaction">
    <interactant intactId="EBI-926706">
        <id>Q13127</id>
    </interactant>
    <interactant intactId="EBI-302489">
        <id>P51532</id>
        <label>SMARCA4</label>
    </interactant>
    <organismsDiffer>false</organismsDiffer>
    <experiments>2</experiments>
</comment>
<comment type="subcellular location">
    <subcellularLocation>
        <location evidence="13 16 18 21 24">Nucleus</location>
    </subcellularLocation>
    <subcellularLocation>
        <location evidence="18 21 24">Cytoplasm</location>
    </subcellularLocation>
    <text evidence="2 18 21 24">Colocalizes with ZFP90 in the nucleus (By similarity). In response to hypoxia, there is a more pronounced increase in levels in the nucleus as compared to the cytoplasm (PubMed:27531581). In aging neurons, increased levels in the nucleus as compared to the cytoplasm (PubMed:24670762, PubMed:30684677).</text>
</comment>
<comment type="subcellular location">
    <molecule>Isoform 2</molecule>
    <subcellularLocation>
        <location evidence="13">Cytoplasm</location>
    </subcellularLocation>
</comment>
<comment type="subcellular location">
    <molecule>Isoform 3</molecule>
    <subcellularLocation>
        <location evidence="7 13">Nucleus</location>
    </subcellularLocation>
</comment>
<comment type="subcellular location">
    <molecule>Isoform 4</molecule>
    <subcellularLocation>
        <location evidence="13">Cytoplasm</location>
    </subcellularLocation>
</comment>
<comment type="alternative products">
    <event type="alternative splicing"/>
    <isoform>
        <id>Q13127-1</id>
        <name>1</name>
        <name evidence="29">REST1</name>
        <sequence type="displayed"/>
    </isoform>
    <isoform>
        <id>Q13127-2</id>
        <name>2</name>
        <sequence type="described" ref="VSP_022064 VSP_022065"/>
    </isoform>
    <isoform>
        <id>Q13127-3</id>
        <name>3</name>
        <name>N4</name>
        <name evidence="28">REST4</name>
        <sequence type="described" ref="VSP_022066 VSP_022068"/>
    </isoform>
    <isoform>
        <id>Q13127-4</id>
        <name>4</name>
        <sequence type="described" ref="VSP_022067"/>
    </isoform>
    <text>Additional isoforms seem to exist.</text>
</comment>
<comment type="tissue specificity">
    <text evidence="16 18 19 24 27">Expressed in neurons of the prefrontal cortex, in hippocampal pyramidal neurons, dentate gyrus granule neurons and cerebellar Purkinje and granule neurons (at protein level) (PubMed:24670762). Expressed in dopaminergic neurons of the substantia nigra (at protein level) (PubMed:30684677). Expressed in neural progenitor cells (at protein level) (PubMed:21258371). In patients suffering from Alzheimer disease, frontotemporal dementia or dementia with Lewy bodies, decreased nuclear levels have been observed in neurons of the prefrontal cortex and the hippocampus, but not in neurons of the dentate gyrus and cerebellum (at protein level) (PubMed:24670762). In patients with Parkinson disease or dementia with Lewy bodies, decreased nuclear levels have been observed in dopaminergic neurons and in cortical neurons and localization to Lewy bodies and pale bodies was detected (at protein level) (PubMed:30684677). Expressed at higher levels in weakly invasive breast cancer cell lines and at lower levels in highly invasive breast cancer lines (at protein level) (PubMed:26053433). Ubiquitous (PubMed:8568247). Expressed at higher levels in the tissues of the lymphocytic compartment, including spleen, thymus, peripheral blood lymphocytes and ovary (PubMed:8568247).</text>
</comment>
<comment type="developmental stage">
    <text evidence="14 18">Expression is cell cycle-dependent with decreased levels in G2 phase; mediated by proteasomal degradation (at protein level) (PubMed:18354482). In aged individuals, increased expression in hippocampal CA1, CA3 and CA4 pyramidal neurons and in dentate granule cell neurons, but not in the cerebellum (PubMed:24670762).</text>
</comment>
<comment type="induction">
    <text evidence="16 18">Up-regulated by Wnt signaling (PubMed:24670762). Up-regulated in the brain of aging individuals but not in Alzheimer disease patients (PubMed:24670762). Up-regulated by oxidative stress (PubMed:24670762). Down-regulated during neural progenitor cell differentiation (PubMed:21258371).</text>
</comment>
<comment type="domain">
    <text evidence="13">The C2H2-type zinc finger 5 is required for nuclear localization.</text>
</comment>
<comment type="PTM">
    <text evidence="2">O-glycosylated.</text>
</comment>
<comment type="PTM">
    <text evidence="14">Phosphorylated; phosphorylation is required for ubiquitination.</text>
</comment>
<comment type="PTM">
    <text evidence="14 16">Ubiquitinated; ubiquitination is mediated by BTRC and leads to proteasomal degradation in G2 phase (PubMed:18354482, PubMed:21258371). Ubiquitination increases during neuronal differentiation (PubMed:21258371). Deubiquitinated by USP7; leading to its stabilization and promoting the maintenance of neural progenitor cells (PubMed:21258371).</text>
</comment>
<comment type="disease" evidence="20">
    <disease id="DI-04647">
        <name>Wilms tumor 6</name>
        <acronym>WT6</acronym>
        <description>A pediatric malignancy of kidney, and the most common childhood abdominal malignancy. It is caused by the uncontrolled multiplication of renal stem, stromal, and epithelial cells.</description>
        <dbReference type="MIM" id="616806"/>
    </disease>
    <text>Disease susceptibility is associated with variants affecting the gene represented in this entry.</text>
</comment>
<comment type="disease" evidence="22">
    <disease id="DI-05072">
        <name>Fibromatosis, gingival, 5</name>
        <acronym>GINGF5</acronym>
        <description>An autosomal dominant form of hereditary gingival fibromatosis, a rare condition characterized by a slow, progressive overgrowth of the gingiva. The excess gingival tissue can cover part of or the entire crown, and can result in diastemas, teeth displacement, or retention of primary or impacted teeth.</description>
        <dbReference type="MIM" id="617626"/>
    </disease>
    <text>The disease is caused by variants affecting the gene represented in this entry.</text>
</comment>
<comment type="disease">
    <text evidence="23">An intronic variant that affects alternative splicing of REST into isoform 3 and inactivation of REST repressor activity is associated with progressive hearing loss and deafness.</text>
</comment>
<comment type="disease" evidence="23">
    <disease id="DI-05689">
        <name>Deafness, autosomal dominant, 27</name>
        <acronym>DFNA27</acronym>
        <description>A form of non-syndromic deafness characterized by postlingual, progressive, moderate to profound sensorineural hearing loss.</description>
        <dbReference type="MIM" id="612431"/>
    </disease>
    <text evidence="23">The disease may be caused by variants affecting the gene represented in this entry. An intronic variant that affects alternative splicing of REST and inactivation of REST repressor activity fully segregates with deafness in a 3-generation family.</text>
</comment>
<comment type="miscellaneous">
    <molecule>Isoform 3</molecule>
    <text evidence="2 7">Produced by SRRM4-dependent alternative splicing in neurons and inner ear hair cells (By similarity). Lacks the four C-terminal zinc fingers and the RCOR1 corepressor interaction site found in full length REST isoform 1, which are required for full DNA-binding and repressive activity (PubMed:11741002).</text>
</comment>
<comment type="caution">
    <molecule>Isoform 3</molecule>
    <text evidence="7 8">Controversial data exists concerning the repressor activity of isoform 3. A study showed that isoform 3 exhibits weak repressor activity of a NRSE motif-containing reporter construct (PubMed:11779185). Another report, however, does not observe any isoform 3 transcriptional repressor activity of a NRSE motif-containing reporter construct (PubMed:11741002). Controversial data also exists regarding the function of isoform 3 on the negative regulation of isoform 1. It was shown that isoform 3 negatively regulates the repressor activity of isoform 1 by binding to isoform 1, thereby preventing its binding to NRSE and leading to derepression of target genes (PubMed:11779185). Another study, however, did not observe any inhibitory activity of isoform 3 on the isoform 1 transcriptional repressor activity (PubMed:11741002).</text>
</comment>
<comment type="sequence caution" evidence="31">
    <conflict type="frameshift">
        <sequence resource="EMBL-CDS" id="AAA98503"/>
    </conflict>
</comment>
<comment type="sequence caution" evidence="31">
    <conflict type="erroneous initiation">
        <sequence resource="EMBL-CDS" id="AAC50114"/>
    </conflict>
    <text>Extended N-terminus.</text>
</comment>
<comment type="sequence caution" evidence="31">
    <conflict type="erroneous initiation">
        <sequence resource="EMBL-CDS" id="AAC50115"/>
    </conflict>
    <text>Extended N-terminus.</text>
</comment>
<comment type="sequence caution" evidence="31">
    <conflict type="miscellaneous discrepancy">
        <sequence resource="EMBL-CDS" id="AAH38985"/>
    </conflict>
    <text>Contaminating sequence. Potential poly-A sequence.</text>
</comment>
<comment type="sequence caution" evidence="31">
    <conflict type="erroneous initiation">
        <sequence resource="EMBL-CDS" id="BAD92987"/>
    </conflict>
    <text>Extended N-terminus.</text>
</comment>
<comment type="online information" name="Atlas of Genetics and Cytogenetics in Oncology and Haematology">
    <link uri="https://atlasgeneticsoncology.org/gene/44266/REST"/>
</comment>